<sequence length="320" mass="36201">MPKKKTGARKKAENRREREKQLRASRSTIDLAKHPCNASMECDKCQRRQKNRAFCYFCNSVQKLPICAQCGKTKCMMKSSDCVIKHAGVYSTGLAMVGAICDFCEAWVCHGRKCLSTHACACPLTDAECVECERGVWDHGGRIFSCSFCHNFLCEDDQFEHQASCQVLEAETFKCVSCNRLGQHSCLRCKACFCDDHTRSKVFKQEKGKQPPCPKCGHETQETKDLSMSTRSLKFGRQTGGEEGDGASGYDAYWKNLSSDKYGDTSYHDEEEDEYEAEDDEEEEDEGRKDSDTESSDLFTNLNLGRTYASGYAHYEEQEN</sequence>
<comment type="subcellular location">
    <subcellularLocation>
        <location evidence="1">Nucleus</location>
    </subcellularLocation>
    <subcellularLocation>
        <location evidence="1">Nucleus</location>
        <location evidence="1">Nucleolus</location>
    </subcellularLocation>
    <subcellularLocation>
        <location evidence="1">Chromosome</location>
        <location evidence="1">Centromere</location>
    </subcellularLocation>
    <text evidence="1">Predominantly expressed in nucleolus. In mitosis associated with centromeres and concentrated at the midbody in cytokinesis (By similarity).</text>
</comment>
<comment type="similarity">
    <text evidence="5">Belongs to the NOA36 family.</text>
</comment>
<protein>
    <recommendedName>
        <fullName>Zinc finger protein 330</fullName>
    </recommendedName>
    <alternativeName>
        <fullName>Nucleolar autoantigen 36</fullName>
    </alternativeName>
</protein>
<keyword id="KW-0137">Centromere</keyword>
<keyword id="KW-0158">Chromosome</keyword>
<keyword id="KW-0479">Metal-binding</keyword>
<keyword id="KW-0539">Nucleus</keyword>
<keyword id="KW-0597">Phosphoprotein</keyword>
<keyword id="KW-1185">Reference proteome</keyword>
<keyword id="KW-0677">Repeat</keyword>
<keyword id="KW-0862">Zinc</keyword>
<keyword id="KW-0863">Zinc-finger</keyword>
<feature type="chain" id="PRO_0000285126" description="Zinc finger protein 330">
    <location>
        <begin position="1"/>
        <end position="320"/>
    </location>
</feature>
<feature type="zinc finger region" description="C4-type 1" evidence="3">
    <location>
        <begin position="42"/>
        <end position="58"/>
    </location>
</feature>
<feature type="zinc finger region" description="C4-type 2" evidence="3">
    <location>
        <begin position="67"/>
        <end position="104"/>
    </location>
</feature>
<feature type="zinc finger region" description="C4-type 3" evidence="3">
    <location>
        <begin position="129"/>
        <end position="149"/>
    </location>
</feature>
<feature type="zinc finger region" description="C4-type 4" evidence="3">
    <location>
        <begin position="175"/>
        <end position="189"/>
    </location>
</feature>
<feature type="region of interest" description="Disordered" evidence="4">
    <location>
        <begin position="1"/>
        <end position="23"/>
    </location>
</feature>
<feature type="region of interest" description="Disordered" evidence="4">
    <location>
        <begin position="206"/>
        <end position="320"/>
    </location>
</feature>
<feature type="short sequence motif" description="Nuclear localization signal" evidence="3">
    <location>
        <begin position="3"/>
        <end position="11"/>
    </location>
</feature>
<feature type="compositionally biased region" description="Basic and acidic residues" evidence="4">
    <location>
        <begin position="10"/>
        <end position="22"/>
    </location>
</feature>
<feature type="compositionally biased region" description="Basic and acidic residues" evidence="4">
    <location>
        <begin position="216"/>
        <end position="225"/>
    </location>
</feature>
<feature type="compositionally biased region" description="Acidic residues" evidence="4">
    <location>
        <begin position="269"/>
        <end position="285"/>
    </location>
</feature>
<feature type="modified residue" description="Phosphoserine" evidence="2">
    <location>
        <position position="291"/>
    </location>
</feature>
<gene>
    <name type="primary">ZNF330</name>
    <name type="synonym">NOA36</name>
</gene>
<organism>
    <name type="scientific">Pongo abelii</name>
    <name type="common">Sumatran orangutan</name>
    <name type="synonym">Pongo pygmaeus abelii</name>
    <dbReference type="NCBI Taxonomy" id="9601"/>
    <lineage>
        <taxon>Eukaryota</taxon>
        <taxon>Metazoa</taxon>
        <taxon>Chordata</taxon>
        <taxon>Craniata</taxon>
        <taxon>Vertebrata</taxon>
        <taxon>Euteleostomi</taxon>
        <taxon>Mammalia</taxon>
        <taxon>Eutheria</taxon>
        <taxon>Euarchontoglires</taxon>
        <taxon>Primates</taxon>
        <taxon>Haplorrhini</taxon>
        <taxon>Catarrhini</taxon>
        <taxon>Hominidae</taxon>
        <taxon>Pongo</taxon>
    </lineage>
</organism>
<dbReference type="EMBL" id="CR859450">
    <property type="protein sequence ID" value="CAH91621.1"/>
    <property type="molecule type" value="mRNA"/>
</dbReference>
<dbReference type="RefSeq" id="NP_001125954.1">
    <property type="nucleotide sequence ID" value="NM_001132482.1"/>
</dbReference>
<dbReference type="RefSeq" id="XP_063579036.1">
    <property type="nucleotide sequence ID" value="XM_063722966.1"/>
</dbReference>
<dbReference type="FunCoup" id="Q5R9D9">
    <property type="interactions" value="2113"/>
</dbReference>
<dbReference type="STRING" id="9601.ENSPPYP00000016850"/>
<dbReference type="Ensembl" id="ENSPPYT00000017531.3">
    <property type="protein sequence ID" value="ENSPPYP00000016850.2"/>
    <property type="gene ID" value="ENSPPYG00000015084.3"/>
</dbReference>
<dbReference type="GeneID" id="100172889"/>
<dbReference type="KEGG" id="pon:100172889"/>
<dbReference type="CTD" id="27309"/>
<dbReference type="eggNOG" id="ENOG502QRJT">
    <property type="taxonomic scope" value="Eukaryota"/>
</dbReference>
<dbReference type="GeneTree" id="ENSGT00390000017043"/>
<dbReference type="HOGENOM" id="CLU_074902_0_0_1"/>
<dbReference type="InParanoid" id="Q5R9D9"/>
<dbReference type="OMA" id="CQRTRRQ"/>
<dbReference type="OrthoDB" id="10258894at2759"/>
<dbReference type="TreeFam" id="TF323303"/>
<dbReference type="Proteomes" id="UP000001595">
    <property type="component" value="Chromosome 4"/>
</dbReference>
<dbReference type="GO" id="GO:0000775">
    <property type="term" value="C:chromosome, centromeric region"/>
    <property type="evidence" value="ECO:0007669"/>
    <property type="project" value="UniProtKB-SubCell"/>
</dbReference>
<dbReference type="GO" id="GO:0036064">
    <property type="term" value="C:ciliary basal body"/>
    <property type="evidence" value="ECO:0007669"/>
    <property type="project" value="Ensembl"/>
</dbReference>
<dbReference type="GO" id="GO:0005829">
    <property type="term" value="C:cytosol"/>
    <property type="evidence" value="ECO:0007669"/>
    <property type="project" value="Ensembl"/>
</dbReference>
<dbReference type="GO" id="GO:0030496">
    <property type="term" value="C:midbody"/>
    <property type="evidence" value="ECO:0007669"/>
    <property type="project" value="Ensembl"/>
</dbReference>
<dbReference type="GO" id="GO:0005730">
    <property type="term" value="C:nucleolus"/>
    <property type="evidence" value="ECO:0007669"/>
    <property type="project" value="UniProtKB-SubCell"/>
</dbReference>
<dbReference type="GO" id="GO:0005654">
    <property type="term" value="C:nucleoplasm"/>
    <property type="evidence" value="ECO:0007669"/>
    <property type="project" value="Ensembl"/>
</dbReference>
<dbReference type="GO" id="GO:0008270">
    <property type="term" value="F:zinc ion binding"/>
    <property type="evidence" value="ECO:0007669"/>
    <property type="project" value="UniProtKB-KW"/>
</dbReference>
<dbReference type="InterPro" id="IPR010531">
    <property type="entry name" value="NOA36"/>
</dbReference>
<dbReference type="PANTHER" id="PTHR13214">
    <property type="entry name" value="ZINC FINGER PROTEIN 330"/>
    <property type="match status" value="1"/>
</dbReference>
<dbReference type="PANTHER" id="PTHR13214:SF1">
    <property type="entry name" value="ZINC FINGER PROTEIN 330"/>
    <property type="match status" value="1"/>
</dbReference>
<dbReference type="Pfam" id="PF06524">
    <property type="entry name" value="NOA36"/>
    <property type="match status" value="1"/>
</dbReference>
<proteinExistence type="evidence at transcript level"/>
<name>ZN330_PONAB</name>
<reference key="1">
    <citation type="submission" date="2004-11" db="EMBL/GenBank/DDBJ databases">
        <authorList>
            <consortium name="The German cDNA consortium"/>
        </authorList>
    </citation>
    <scope>NUCLEOTIDE SEQUENCE [LARGE SCALE MRNA]</scope>
    <source>
        <tissue>Heart</tissue>
    </source>
</reference>
<evidence type="ECO:0000250" key="1"/>
<evidence type="ECO:0000250" key="2">
    <source>
        <dbReference type="UniProtKB" id="Q9Y3S2"/>
    </source>
</evidence>
<evidence type="ECO:0000255" key="3"/>
<evidence type="ECO:0000256" key="4">
    <source>
        <dbReference type="SAM" id="MobiDB-lite"/>
    </source>
</evidence>
<evidence type="ECO:0000305" key="5"/>
<accession>Q5R9D9</accession>